<accession>P38512</accession>
<sequence>MKQEKLSLHDVLIRPIITEKALILREQRKYVFEVNPLANKNLVKEAVEKLFNVKVEKVNILNMKPKPKRRGIFEGKTRSWKKAVVTLKEGYTIKELEGEH</sequence>
<proteinExistence type="inferred from homology"/>
<evidence type="ECO:0000255" key="1">
    <source>
        <dbReference type="HAMAP-Rule" id="MF_01369"/>
    </source>
</evidence>
<evidence type="ECO:0000305" key="2"/>
<gene>
    <name evidence="1" type="primary">rplW</name>
    <name type="ordered locus">TM_1498</name>
</gene>
<dbReference type="EMBL" id="Z21677">
    <property type="protein sequence ID" value="CAA79779.1"/>
    <property type="molecule type" value="Genomic_DNA"/>
</dbReference>
<dbReference type="EMBL" id="AE000512">
    <property type="protein sequence ID" value="AAD36564.1"/>
    <property type="molecule type" value="Genomic_DNA"/>
</dbReference>
<dbReference type="PIR" id="S40190">
    <property type="entry name" value="S40190"/>
</dbReference>
<dbReference type="RefSeq" id="NP_229298.1">
    <property type="nucleotide sequence ID" value="NC_000853.1"/>
</dbReference>
<dbReference type="RefSeq" id="WP_004081832.1">
    <property type="nucleotide sequence ID" value="NZ_CP011107.1"/>
</dbReference>
<dbReference type="SMR" id="P38512"/>
<dbReference type="FunCoup" id="P38512">
    <property type="interactions" value="321"/>
</dbReference>
<dbReference type="STRING" id="243274.TM_1498"/>
<dbReference type="PaxDb" id="243274-THEMA_06810"/>
<dbReference type="EnsemblBacteria" id="AAD36564">
    <property type="protein sequence ID" value="AAD36564"/>
    <property type="gene ID" value="TM_1498"/>
</dbReference>
<dbReference type="KEGG" id="tma:TM1498"/>
<dbReference type="KEGG" id="tmi:THEMA_06810"/>
<dbReference type="KEGG" id="tmm:Tmari_1506"/>
<dbReference type="KEGG" id="tmw:THMA_1530"/>
<dbReference type="eggNOG" id="COG0089">
    <property type="taxonomic scope" value="Bacteria"/>
</dbReference>
<dbReference type="InParanoid" id="P38512"/>
<dbReference type="OrthoDB" id="9793353at2"/>
<dbReference type="Proteomes" id="UP000008183">
    <property type="component" value="Chromosome"/>
</dbReference>
<dbReference type="GO" id="GO:0022625">
    <property type="term" value="C:cytosolic large ribosomal subunit"/>
    <property type="evidence" value="ECO:0000318"/>
    <property type="project" value="GO_Central"/>
</dbReference>
<dbReference type="GO" id="GO:0019843">
    <property type="term" value="F:rRNA binding"/>
    <property type="evidence" value="ECO:0007669"/>
    <property type="project" value="UniProtKB-UniRule"/>
</dbReference>
<dbReference type="GO" id="GO:0003735">
    <property type="term" value="F:structural constituent of ribosome"/>
    <property type="evidence" value="ECO:0000318"/>
    <property type="project" value="GO_Central"/>
</dbReference>
<dbReference type="GO" id="GO:0006412">
    <property type="term" value="P:translation"/>
    <property type="evidence" value="ECO:0007669"/>
    <property type="project" value="UniProtKB-UniRule"/>
</dbReference>
<dbReference type="FunFam" id="3.30.70.330:FF:000001">
    <property type="entry name" value="50S ribosomal protein L23"/>
    <property type="match status" value="1"/>
</dbReference>
<dbReference type="Gene3D" id="3.30.70.330">
    <property type="match status" value="1"/>
</dbReference>
<dbReference type="HAMAP" id="MF_01369_B">
    <property type="entry name" value="Ribosomal_uL23_B"/>
    <property type="match status" value="1"/>
</dbReference>
<dbReference type="InterPro" id="IPR012677">
    <property type="entry name" value="Nucleotide-bd_a/b_plait_sf"/>
</dbReference>
<dbReference type="InterPro" id="IPR013025">
    <property type="entry name" value="Ribosomal_uL23-like"/>
</dbReference>
<dbReference type="InterPro" id="IPR012678">
    <property type="entry name" value="Ribosomal_uL23/eL15/eS24_sf"/>
</dbReference>
<dbReference type="InterPro" id="IPR001014">
    <property type="entry name" value="Ribosomal_uL23_CS"/>
</dbReference>
<dbReference type="NCBIfam" id="NF004363">
    <property type="entry name" value="PRK05738.2-4"/>
    <property type="match status" value="1"/>
</dbReference>
<dbReference type="NCBIfam" id="NF004366">
    <property type="entry name" value="PRK05738.3-2"/>
    <property type="match status" value="1"/>
</dbReference>
<dbReference type="PANTHER" id="PTHR11620">
    <property type="entry name" value="60S RIBOSOMAL PROTEIN L23A"/>
    <property type="match status" value="1"/>
</dbReference>
<dbReference type="Pfam" id="PF00276">
    <property type="entry name" value="Ribosomal_L23"/>
    <property type="match status" value="1"/>
</dbReference>
<dbReference type="SUPFAM" id="SSF54189">
    <property type="entry name" value="Ribosomal proteins S24e, L23 and L15e"/>
    <property type="match status" value="1"/>
</dbReference>
<dbReference type="PROSITE" id="PS00050">
    <property type="entry name" value="RIBOSOMAL_L23"/>
    <property type="match status" value="1"/>
</dbReference>
<feature type="chain" id="PRO_0000129426" description="Large ribosomal subunit protein uL23">
    <location>
        <begin position="1"/>
        <end position="100"/>
    </location>
</feature>
<keyword id="KW-1185">Reference proteome</keyword>
<keyword id="KW-0687">Ribonucleoprotein</keyword>
<keyword id="KW-0689">Ribosomal protein</keyword>
<keyword id="KW-0694">RNA-binding</keyword>
<keyword id="KW-0699">rRNA-binding</keyword>
<reference key="1">
    <citation type="journal article" date="1994" name="J. Bacteriol.">
        <title>Phylogenetic depth of S10 and spc operons: cloning and sequencing of a ribosomal protein gene cluster from the extremely thermophilic bacterium Thermotoga maritima.</title>
        <authorList>
            <person name="Sanangelantoni A.M."/>
            <person name="Bocchetta M."/>
            <person name="Cammarano P."/>
            <person name="Tiboni O."/>
        </authorList>
    </citation>
    <scope>NUCLEOTIDE SEQUENCE [GENOMIC DNA]</scope>
    <source>
        <strain>ATCC 43589 / DSM 3109 / JCM 10099 / NBRC 100826 / MSB8</strain>
    </source>
</reference>
<reference key="2">
    <citation type="journal article" date="1999" name="Nature">
        <title>Evidence for lateral gene transfer between Archaea and Bacteria from genome sequence of Thermotoga maritima.</title>
        <authorList>
            <person name="Nelson K.E."/>
            <person name="Clayton R.A."/>
            <person name="Gill S.R."/>
            <person name="Gwinn M.L."/>
            <person name="Dodson R.J."/>
            <person name="Haft D.H."/>
            <person name="Hickey E.K."/>
            <person name="Peterson J.D."/>
            <person name="Nelson W.C."/>
            <person name="Ketchum K.A."/>
            <person name="McDonald L.A."/>
            <person name="Utterback T.R."/>
            <person name="Malek J.A."/>
            <person name="Linher K.D."/>
            <person name="Garrett M.M."/>
            <person name="Stewart A.M."/>
            <person name="Cotton M.D."/>
            <person name="Pratt M.S."/>
            <person name="Phillips C.A."/>
            <person name="Richardson D.L."/>
            <person name="Heidelberg J.F."/>
            <person name="Sutton G.G."/>
            <person name="Fleischmann R.D."/>
            <person name="Eisen J.A."/>
            <person name="White O."/>
            <person name="Salzberg S.L."/>
            <person name="Smith H.O."/>
            <person name="Venter J.C."/>
            <person name="Fraser C.M."/>
        </authorList>
    </citation>
    <scope>NUCLEOTIDE SEQUENCE [LARGE SCALE GENOMIC DNA]</scope>
    <source>
        <strain>ATCC 43589 / DSM 3109 / JCM 10099 / NBRC 100826 / MSB8</strain>
    </source>
</reference>
<name>RL23_THEMA</name>
<organism>
    <name type="scientific">Thermotoga maritima (strain ATCC 43589 / DSM 3109 / JCM 10099 / NBRC 100826 / MSB8)</name>
    <dbReference type="NCBI Taxonomy" id="243274"/>
    <lineage>
        <taxon>Bacteria</taxon>
        <taxon>Thermotogati</taxon>
        <taxon>Thermotogota</taxon>
        <taxon>Thermotogae</taxon>
        <taxon>Thermotogales</taxon>
        <taxon>Thermotogaceae</taxon>
        <taxon>Thermotoga</taxon>
    </lineage>
</organism>
<comment type="function">
    <text evidence="1">One of the early assembly proteins it binds 23S rRNA. One of the proteins that surrounds the polypeptide exit tunnel on the outside of the ribosome. Forms the main docking site for trigger factor binding to the ribosome.</text>
</comment>
<comment type="subunit">
    <text evidence="1">Part of the 50S ribosomal subunit. Contacts protein L29, and trigger factor when it is bound to the ribosome.</text>
</comment>
<comment type="similarity">
    <text evidence="1">Belongs to the universal ribosomal protein uL23 family.</text>
</comment>
<protein>
    <recommendedName>
        <fullName evidence="1">Large ribosomal subunit protein uL23</fullName>
    </recommendedName>
    <alternativeName>
        <fullName evidence="2">50S ribosomal protein L23</fullName>
    </alternativeName>
</protein>